<organism>
    <name type="scientific">Natronomonas pharaonis (strain ATCC 35678 / DSM 2160 / CIP 103997 / JCM 8858 / NBRC 14720 / NCIMB 2260 / Gabara)</name>
    <name type="common">Halobacterium pharaonis</name>
    <dbReference type="NCBI Taxonomy" id="348780"/>
    <lineage>
        <taxon>Archaea</taxon>
        <taxon>Methanobacteriati</taxon>
        <taxon>Methanobacteriota</taxon>
        <taxon>Stenosarchaea group</taxon>
        <taxon>Halobacteria</taxon>
        <taxon>Halobacteriales</taxon>
        <taxon>Haloarculaceae</taxon>
        <taxon>Natronomonas</taxon>
    </lineage>
</organism>
<feature type="chain" id="PRO_0000406277" description="FAD synthase">
    <location>
        <begin position="1"/>
        <end position="140"/>
    </location>
</feature>
<feature type="binding site" evidence="1">
    <location>
        <begin position="9"/>
        <end position="10"/>
    </location>
    <ligand>
        <name>ATP</name>
        <dbReference type="ChEBI" id="CHEBI:30616"/>
    </ligand>
</feature>
<feature type="binding site" evidence="1">
    <location>
        <begin position="14"/>
        <end position="17"/>
    </location>
    <ligand>
        <name>ATP</name>
        <dbReference type="ChEBI" id="CHEBI:30616"/>
    </ligand>
</feature>
<feature type="binding site" evidence="1">
    <location>
        <position position="92"/>
    </location>
    <ligand>
        <name>ATP</name>
        <dbReference type="ChEBI" id="CHEBI:30616"/>
    </ligand>
</feature>
<reference key="1">
    <citation type="journal article" date="2005" name="Genome Res.">
        <title>Living with two extremes: conclusions from the genome sequence of Natronomonas pharaonis.</title>
        <authorList>
            <person name="Falb M."/>
            <person name="Pfeiffer F."/>
            <person name="Palm P."/>
            <person name="Rodewald K."/>
            <person name="Hickmann V."/>
            <person name="Tittor J."/>
            <person name="Oesterhelt D."/>
        </authorList>
    </citation>
    <scope>NUCLEOTIDE SEQUENCE [LARGE SCALE GENOMIC DNA]</scope>
    <source>
        <strain>ATCC 35678 / DSM 2160 / CIP 103997 / JCM 8858 / NBRC 14720 / NCIMB 2260 / Gabara</strain>
    </source>
</reference>
<keyword id="KW-0067">ATP-binding</keyword>
<keyword id="KW-0274">FAD</keyword>
<keyword id="KW-0285">Flavoprotein</keyword>
<keyword id="KW-0288">FMN</keyword>
<keyword id="KW-0547">Nucleotide-binding</keyword>
<keyword id="KW-0548">Nucleotidyltransferase</keyword>
<keyword id="KW-1185">Reference proteome</keyword>
<keyword id="KW-0808">Transferase</keyword>
<dbReference type="EC" id="2.7.7.2" evidence="1"/>
<dbReference type="EMBL" id="CR936257">
    <property type="protein sequence ID" value="CAI49701.1"/>
    <property type="molecule type" value="Genomic_DNA"/>
</dbReference>
<dbReference type="RefSeq" id="WP_011323323.1">
    <property type="nucleotide sequence ID" value="NC_007426.1"/>
</dbReference>
<dbReference type="SMR" id="Q3IQ95"/>
<dbReference type="STRING" id="348780.NP_3220A"/>
<dbReference type="EnsemblBacteria" id="CAI49701">
    <property type="protein sequence ID" value="CAI49701"/>
    <property type="gene ID" value="NP_3220A"/>
</dbReference>
<dbReference type="GeneID" id="3701688"/>
<dbReference type="KEGG" id="nph:NP_3220A"/>
<dbReference type="eggNOG" id="arCOG01222">
    <property type="taxonomic scope" value="Archaea"/>
</dbReference>
<dbReference type="HOGENOM" id="CLU_034585_2_1_2"/>
<dbReference type="OrthoDB" id="1912at2157"/>
<dbReference type="UniPathway" id="UPA00277">
    <property type="reaction ID" value="UER00407"/>
</dbReference>
<dbReference type="Proteomes" id="UP000002698">
    <property type="component" value="Chromosome"/>
</dbReference>
<dbReference type="GO" id="GO:0005524">
    <property type="term" value="F:ATP binding"/>
    <property type="evidence" value="ECO:0007669"/>
    <property type="project" value="UniProtKB-UniRule"/>
</dbReference>
<dbReference type="GO" id="GO:0003919">
    <property type="term" value="F:FMN adenylyltransferase activity"/>
    <property type="evidence" value="ECO:0007669"/>
    <property type="project" value="UniProtKB-UniRule"/>
</dbReference>
<dbReference type="GO" id="GO:0006747">
    <property type="term" value="P:FAD biosynthetic process"/>
    <property type="evidence" value="ECO:0007669"/>
    <property type="project" value="UniProtKB-UniRule"/>
</dbReference>
<dbReference type="GO" id="GO:0046444">
    <property type="term" value="P:FMN metabolic process"/>
    <property type="evidence" value="ECO:0007669"/>
    <property type="project" value="UniProtKB-UniRule"/>
</dbReference>
<dbReference type="Gene3D" id="3.40.50.620">
    <property type="entry name" value="HUPs"/>
    <property type="match status" value="1"/>
</dbReference>
<dbReference type="HAMAP" id="MF_02115">
    <property type="entry name" value="FAD_synth_arch"/>
    <property type="match status" value="1"/>
</dbReference>
<dbReference type="InterPro" id="IPR050385">
    <property type="entry name" value="Archaeal_FAD_synthase"/>
</dbReference>
<dbReference type="InterPro" id="IPR004821">
    <property type="entry name" value="Cyt_trans-like"/>
</dbReference>
<dbReference type="InterPro" id="IPR024902">
    <property type="entry name" value="FAD_synth_RibL"/>
</dbReference>
<dbReference type="InterPro" id="IPR014729">
    <property type="entry name" value="Rossmann-like_a/b/a_fold"/>
</dbReference>
<dbReference type="NCBIfam" id="TIGR00125">
    <property type="entry name" value="cyt_tran_rel"/>
    <property type="match status" value="1"/>
</dbReference>
<dbReference type="PANTHER" id="PTHR43793">
    <property type="entry name" value="FAD SYNTHASE"/>
    <property type="match status" value="1"/>
</dbReference>
<dbReference type="PANTHER" id="PTHR43793:SF1">
    <property type="entry name" value="FAD SYNTHASE"/>
    <property type="match status" value="1"/>
</dbReference>
<dbReference type="Pfam" id="PF01467">
    <property type="entry name" value="CTP_transf_like"/>
    <property type="match status" value="1"/>
</dbReference>
<dbReference type="SUPFAM" id="SSF52374">
    <property type="entry name" value="Nucleotidylyl transferase"/>
    <property type="match status" value="1"/>
</dbReference>
<gene>
    <name evidence="1" type="primary">ribL</name>
    <name type="ordered locus">NP_3220A</name>
</gene>
<name>RIBL_NATPD</name>
<evidence type="ECO:0000255" key="1">
    <source>
        <dbReference type="HAMAP-Rule" id="MF_02115"/>
    </source>
</evidence>
<proteinExistence type="inferred from homology"/>
<accession>Q3IQ95</accession>
<comment type="function">
    <text evidence="1">Catalyzes the transfer of the AMP portion of ATP to flavin mononucleotide (FMN) to produce flavin adenine dinucleotide (FAD) coenzyme.</text>
</comment>
<comment type="catalytic activity">
    <reaction evidence="1">
        <text>FMN + ATP + H(+) = FAD + diphosphate</text>
        <dbReference type="Rhea" id="RHEA:17237"/>
        <dbReference type="ChEBI" id="CHEBI:15378"/>
        <dbReference type="ChEBI" id="CHEBI:30616"/>
        <dbReference type="ChEBI" id="CHEBI:33019"/>
        <dbReference type="ChEBI" id="CHEBI:57692"/>
        <dbReference type="ChEBI" id="CHEBI:58210"/>
        <dbReference type="EC" id="2.7.7.2"/>
    </reaction>
</comment>
<comment type="cofactor">
    <cofactor evidence="1">
        <name>a divalent metal cation</name>
        <dbReference type="ChEBI" id="CHEBI:60240"/>
    </cofactor>
</comment>
<comment type="pathway">
    <text evidence="1">Cofactor biosynthesis; FAD biosynthesis; FAD from FMN: step 1/1.</text>
</comment>
<comment type="subunit">
    <text evidence="1">Homodimer.</text>
</comment>
<comment type="similarity">
    <text evidence="1">Belongs to the archaeal FAD synthase family.</text>
</comment>
<sequence length="140" mass="15806">MRRVVAQGTFDLLHPGHLYYLTEAKSMGDELHVIVARSQNVTHKQPPIVPDEQRREMVAGLDPVDSARLGHTDDFFVPIRDIDPDVIVLGHDQHHDDERLAEMLTEEGIDCEVARASARDGDDKILSTGRIVDRICEERC</sequence>
<protein>
    <recommendedName>
        <fullName evidence="1">FAD synthase</fullName>
        <ecNumber evidence="1">2.7.7.2</ecNumber>
    </recommendedName>
    <alternativeName>
        <fullName evidence="1">FMN adenylyltransferase</fullName>
    </alternativeName>
    <alternativeName>
        <fullName evidence="1">Flavin adenine dinucleotide synthase</fullName>
    </alternativeName>
</protein>